<organism>
    <name type="scientific">Human immunodeficiency virus type 2 subtype B (isolate D205)</name>
    <name type="common">HIV-2</name>
    <dbReference type="NCBI Taxonomy" id="11716"/>
    <lineage>
        <taxon>Viruses</taxon>
        <taxon>Riboviria</taxon>
        <taxon>Pararnavirae</taxon>
        <taxon>Artverviricota</taxon>
        <taxon>Revtraviricetes</taxon>
        <taxon>Ortervirales</taxon>
        <taxon>Retroviridae</taxon>
        <taxon>Orthoretrovirinae</taxon>
        <taxon>Lentivirus</taxon>
        <taxon>Human immunodeficiency virus 2</taxon>
    </lineage>
</organism>
<protein>
    <recommendedName>
        <fullName>Protein Vpr</fullName>
    </recommendedName>
    <alternativeName>
        <fullName>R ORF protein</fullName>
    </alternativeName>
    <alternativeName>
        <fullName>Viral protein R</fullName>
    </alternativeName>
</protein>
<feature type="chain" id="PRO_0000085458" description="Protein Vpr">
    <location>
        <begin position="1"/>
        <end position="101"/>
    </location>
</feature>
<feature type="modified residue" description="Phosphoserine; by host" evidence="1">
    <location>
        <position position="84"/>
    </location>
</feature>
<reference key="1">
    <citation type="journal article" date="1989" name="Nature">
        <title>A highly divergent HIV-2-related isolate.</title>
        <authorList>
            <person name="Dietrich U."/>
            <person name="Adamski M."/>
            <person name="Kreutz R."/>
            <person name="Seipp A."/>
            <person name="Kuehnel H."/>
            <person name="Ruebsamen-Waigmann H."/>
        </authorList>
    </citation>
    <scope>NUCLEOTIDE SEQUENCE [GENOMIC DNA]</scope>
</reference>
<keyword id="KW-0010">Activator</keyword>
<keyword id="KW-0014">AIDS</keyword>
<keyword id="KW-0131">Cell cycle</keyword>
<keyword id="KW-1079">Host G2/M cell cycle arrest by virus</keyword>
<keyword id="KW-1048">Host nucleus</keyword>
<keyword id="KW-0945">Host-virus interaction</keyword>
<keyword id="KW-1121">Modulation of host cell cycle by virus</keyword>
<keyword id="KW-0597">Phosphoprotein</keyword>
<keyword id="KW-0804">Transcription</keyword>
<keyword id="KW-0805">Transcription regulation</keyword>
<keyword id="KW-1163">Viral penetration into host nucleus</keyword>
<keyword id="KW-0946">Virion</keyword>
<keyword id="KW-1160">Virus entry into host cell</keyword>
<sequence>MAEAAPEIPPENENPQREPWEEWIGEILEEIKQEALKHFDPRLLTALGNFIYSRHGDTLAGAGELIKILQRALFLHFRAGCQHSRIGQSGGGNPLSTIPPP</sequence>
<proteinExistence type="inferred from homology"/>
<dbReference type="EMBL" id="X61240">
    <property type="status" value="NOT_ANNOTATED_CDS"/>
    <property type="molecule type" value="Genomic_DNA"/>
</dbReference>
<dbReference type="PIR" id="S08439">
    <property type="entry name" value="S08439"/>
</dbReference>
<dbReference type="SMR" id="P15837"/>
<dbReference type="Proteomes" id="UP000247120">
    <property type="component" value="Segment"/>
</dbReference>
<dbReference type="GO" id="GO:0043657">
    <property type="term" value="C:host cell"/>
    <property type="evidence" value="ECO:0007669"/>
    <property type="project" value="GOC"/>
</dbReference>
<dbReference type="GO" id="GO:0042025">
    <property type="term" value="C:host cell nucleus"/>
    <property type="evidence" value="ECO:0007669"/>
    <property type="project" value="UniProtKB-SubCell"/>
</dbReference>
<dbReference type="GO" id="GO:0044423">
    <property type="term" value="C:virion component"/>
    <property type="evidence" value="ECO:0007669"/>
    <property type="project" value="UniProtKB-KW"/>
</dbReference>
<dbReference type="GO" id="GO:0046718">
    <property type="term" value="P:symbiont entry into host cell"/>
    <property type="evidence" value="ECO:0007669"/>
    <property type="project" value="UniProtKB-KW"/>
</dbReference>
<dbReference type="GO" id="GO:0039592">
    <property type="term" value="P:symbiont-mediated arrest of host cell cycle during G2/M transition"/>
    <property type="evidence" value="ECO:0007669"/>
    <property type="project" value="UniProtKB-KW"/>
</dbReference>
<dbReference type="GO" id="GO:0075732">
    <property type="term" value="P:viral penetration into host nucleus"/>
    <property type="evidence" value="ECO:0007669"/>
    <property type="project" value="UniProtKB-KW"/>
</dbReference>
<dbReference type="Gene3D" id="6.10.210.10">
    <property type="match status" value="1"/>
</dbReference>
<dbReference type="Gene3D" id="1.20.5.90">
    <property type="entry name" value="VpR/VpX protein, C-terminal domain"/>
    <property type="match status" value="1"/>
</dbReference>
<dbReference type="InterPro" id="IPR000012">
    <property type="entry name" value="RetroV_VpR/X"/>
</dbReference>
<dbReference type="Pfam" id="PF00522">
    <property type="entry name" value="VPR"/>
    <property type="match status" value="1"/>
</dbReference>
<dbReference type="PRINTS" id="PR00444">
    <property type="entry name" value="HIVVPRVPX"/>
</dbReference>
<name>VPR_HV2D2</name>
<organismHost>
    <name type="scientific">Homo sapiens</name>
    <name type="common">Human</name>
    <dbReference type="NCBI Taxonomy" id="9606"/>
</organismHost>
<evidence type="ECO:0000250" key="1"/>
<comment type="function">
    <text evidence="1">Stimulates gene expression driven by the HIV-2 LTR. Prevents infected cells from undergoing mitosis and proliferating, by inducing arrest or delay in the G2 phase of the cell cycle. Cell cycle arrest creates a favorable environment for maximizing viral expression and production (By similarity).</text>
</comment>
<comment type="subunit">
    <text evidence="1">Interacts with human UNG.</text>
</comment>
<comment type="subcellular location">
    <subcellularLocation>
        <location>Virion</location>
    </subcellularLocation>
    <subcellularLocation>
        <location evidence="1">Host nucleus</location>
    </subcellularLocation>
</comment>
<accession>P15837</accession>
<gene>
    <name type="primary">vpr</name>
</gene>